<organism>
    <name type="scientific">Thermotoga maritima (strain ATCC 43589 / DSM 3109 / JCM 10099 / NBRC 100826 / MSB8)</name>
    <dbReference type="NCBI Taxonomy" id="243274"/>
    <lineage>
        <taxon>Bacteria</taxon>
        <taxon>Thermotogati</taxon>
        <taxon>Thermotogota</taxon>
        <taxon>Thermotogae</taxon>
        <taxon>Thermotogales</taxon>
        <taxon>Thermotogaceae</taxon>
        <taxon>Thermotoga</taxon>
    </lineage>
</organism>
<dbReference type="EC" id="1.17.7.3" evidence="1"/>
<dbReference type="EMBL" id="AE000512">
    <property type="protein sequence ID" value="AAD35972.1"/>
    <property type="molecule type" value="Genomic_DNA"/>
</dbReference>
<dbReference type="PIR" id="D72321">
    <property type="entry name" value="D72321"/>
</dbReference>
<dbReference type="RefSeq" id="NP_228699.1">
    <property type="nucleotide sequence ID" value="NC_000853.1"/>
</dbReference>
<dbReference type="RefSeq" id="WP_004080695.1">
    <property type="nucleotide sequence ID" value="NZ_CP011107.1"/>
</dbReference>
<dbReference type="SMR" id="Q9WZZ3"/>
<dbReference type="FunCoup" id="Q9WZZ3">
    <property type="interactions" value="192"/>
</dbReference>
<dbReference type="STRING" id="243274.TM_0891"/>
<dbReference type="PaxDb" id="243274-THEMA_00180"/>
<dbReference type="EnsemblBacteria" id="AAD35972">
    <property type="protein sequence ID" value="AAD35972"/>
    <property type="gene ID" value="TM_0891"/>
</dbReference>
<dbReference type="KEGG" id="tma:TM0891"/>
<dbReference type="KEGG" id="tmi:THEMA_00180"/>
<dbReference type="KEGG" id="tmm:Tmari_0893"/>
<dbReference type="KEGG" id="tmw:THMA_0913"/>
<dbReference type="eggNOG" id="COG0821">
    <property type="taxonomic scope" value="Bacteria"/>
</dbReference>
<dbReference type="InParanoid" id="Q9WZZ3"/>
<dbReference type="OrthoDB" id="9803214at2"/>
<dbReference type="UniPathway" id="UPA00056">
    <property type="reaction ID" value="UER00096"/>
</dbReference>
<dbReference type="Proteomes" id="UP000008183">
    <property type="component" value="Chromosome"/>
</dbReference>
<dbReference type="GO" id="GO:0051539">
    <property type="term" value="F:4 iron, 4 sulfur cluster binding"/>
    <property type="evidence" value="ECO:0007669"/>
    <property type="project" value="UniProtKB-UniRule"/>
</dbReference>
<dbReference type="GO" id="GO:0046429">
    <property type="term" value="F:4-hydroxy-3-methylbut-2-en-1-yl diphosphate synthase activity (ferredoxin)"/>
    <property type="evidence" value="ECO:0000318"/>
    <property type="project" value="GO_Central"/>
</dbReference>
<dbReference type="GO" id="GO:0141197">
    <property type="term" value="F:4-hydroxy-3-methylbut-2-enyl-diphosphate synthase activity (flavodoxin)"/>
    <property type="evidence" value="ECO:0007669"/>
    <property type="project" value="UniProtKB-EC"/>
</dbReference>
<dbReference type="GO" id="GO:0005506">
    <property type="term" value="F:iron ion binding"/>
    <property type="evidence" value="ECO:0007669"/>
    <property type="project" value="InterPro"/>
</dbReference>
<dbReference type="GO" id="GO:0019288">
    <property type="term" value="P:isopentenyl diphosphate biosynthetic process, methylerythritol 4-phosphate pathway"/>
    <property type="evidence" value="ECO:0000318"/>
    <property type="project" value="GO_Central"/>
</dbReference>
<dbReference type="GO" id="GO:0016114">
    <property type="term" value="P:terpenoid biosynthetic process"/>
    <property type="evidence" value="ECO:0007669"/>
    <property type="project" value="InterPro"/>
</dbReference>
<dbReference type="FunFam" id="3.20.20.20:FF:000001">
    <property type="entry name" value="4-hydroxy-3-methylbut-2-en-1-yl diphosphate synthase (flavodoxin)"/>
    <property type="match status" value="1"/>
</dbReference>
<dbReference type="Gene3D" id="3.20.20.20">
    <property type="entry name" value="Dihydropteroate synthase-like"/>
    <property type="match status" value="1"/>
</dbReference>
<dbReference type="Gene3D" id="3.30.413.10">
    <property type="entry name" value="Sulfite Reductase Hemoprotein, domain 1"/>
    <property type="match status" value="1"/>
</dbReference>
<dbReference type="HAMAP" id="MF_00159">
    <property type="entry name" value="IspG"/>
    <property type="match status" value="1"/>
</dbReference>
<dbReference type="InterPro" id="IPR011005">
    <property type="entry name" value="Dihydropteroate_synth-like_sf"/>
</dbReference>
<dbReference type="InterPro" id="IPR016425">
    <property type="entry name" value="IspG_bac"/>
</dbReference>
<dbReference type="InterPro" id="IPR004588">
    <property type="entry name" value="IspG_bac-typ"/>
</dbReference>
<dbReference type="InterPro" id="IPR045854">
    <property type="entry name" value="NO2/SO3_Rdtase_4Fe4S_sf"/>
</dbReference>
<dbReference type="NCBIfam" id="TIGR00612">
    <property type="entry name" value="ispG_gcpE"/>
    <property type="match status" value="1"/>
</dbReference>
<dbReference type="NCBIfam" id="NF001540">
    <property type="entry name" value="PRK00366.1"/>
    <property type="match status" value="1"/>
</dbReference>
<dbReference type="PANTHER" id="PTHR30454">
    <property type="entry name" value="4-HYDROXY-3-METHYLBUT-2-EN-1-YL DIPHOSPHATE SYNTHASE"/>
    <property type="match status" value="1"/>
</dbReference>
<dbReference type="PANTHER" id="PTHR30454:SF0">
    <property type="entry name" value="4-HYDROXY-3-METHYLBUT-2-EN-1-YL DIPHOSPHATE SYNTHASE (FERREDOXIN), CHLOROPLASTIC"/>
    <property type="match status" value="1"/>
</dbReference>
<dbReference type="Pfam" id="PF04551">
    <property type="entry name" value="GcpE"/>
    <property type="match status" value="1"/>
</dbReference>
<dbReference type="PIRSF" id="PIRSF004640">
    <property type="entry name" value="IspG"/>
    <property type="match status" value="1"/>
</dbReference>
<dbReference type="SUPFAM" id="SSF51717">
    <property type="entry name" value="Dihydropteroate synthetase-like"/>
    <property type="match status" value="1"/>
</dbReference>
<dbReference type="SUPFAM" id="SSF56014">
    <property type="entry name" value="Nitrite and sulphite reductase 4Fe-4S domain-like"/>
    <property type="match status" value="1"/>
</dbReference>
<proteinExistence type="inferred from homology"/>
<gene>
    <name evidence="1" type="primary">ispG</name>
    <name type="ordered locus">TM_0891</name>
</gene>
<keyword id="KW-0004">4Fe-4S</keyword>
<keyword id="KW-0408">Iron</keyword>
<keyword id="KW-0411">Iron-sulfur</keyword>
<keyword id="KW-0414">Isoprene biosynthesis</keyword>
<keyword id="KW-0479">Metal-binding</keyword>
<keyword id="KW-0560">Oxidoreductase</keyword>
<keyword id="KW-1185">Reference proteome</keyword>
<comment type="function">
    <text evidence="1">Converts 2C-methyl-D-erythritol 2,4-cyclodiphosphate (ME-2,4cPP) into 1-hydroxy-2-methyl-2-(E)-butenyl 4-diphosphate.</text>
</comment>
<comment type="catalytic activity">
    <reaction evidence="1">
        <text>(2E)-4-hydroxy-3-methylbut-2-enyl diphosphate + oxidized [flavodoxin] + H2O + 2 H(+) = 2-C-methyl-D-erythritol 2,4-cyclic diphosphate + reduced [flavodoxin]</text>
        <dbReference type="Rhea" id="RHEA:43604"/>
        <dbReference type="Rhea" id="RHEA-COMP:10622"/>
        <dbReference type="Rhea" id="RHEA-COMP:10623"/>
        <dbReference type="ChEBI" id="CHEBI:15377"/>
        <dbReference type="ChEBI" id="CHEBI:15378"/>
        <dbReference type="ChEBI" id="CHEBI:57618"/>
        <dbReference type="ChEBI" id="CHEBI:58210"/>
        <dbReference type="ChEBI" id="CHEBI:58483"/>
        <dbReference type="ChEBI" id="CHEBI:128753"/>
        <dbReference type="EC" id="1.17.7.3"/>
    </reaction>
</comment>
<comment type="cofactor">
    <cofactor evidence="1">
        <name>[4Fe-4S] cluster</name>
        <dbReference type="ChEBI" id="CHEBI:49883"/>
    </cofactor>
    <text evidence="1">Binds 1 [4Fe-4S] cluster.</text>
</comment>
<comment type="pathway">
    <text evidence="1">Isoprenoid biosynthesis; isopentenyl diphosphate biosynthesis via DXP pathway; isopentenyl diphosphate from 1-deoxy-D-xylulose 5-phosphate: step 5/6.</text>
</comment>
<comment type="similarity">
    <text evidence="1">Belongs to the IspG family.</text>
</comment>
<protein>
    <recommendedName>
        <fullName evidence="1">4-hydroxy-3-methylbut-2-en-1-yl diphosphate synthase (flavodoxin)</fullName>
        <ecNumber evidence="1">1.17.7.3</ecNumber>
    </recommendedName>
    <alternativeName>
        <fullName evidence="1">1-hydroxy-2-methyl-2-(E)-butenyl 4-diphosphate synthase</fullName>
    </alternativeName>
</protein>
<evidence type="ECO:0000255" key="1">
    <source>
        <dbReference type="HAMAP-Rule" id="MF_00159"/>
    </source>
</evidence>
<reference key="1">
    <citation type="journal article" date="1999" name="Nature">
        <title>Evidence for lateral gene transfer between Archaea and Bacteria from genome sequence of Thermotoga maritima.</title>
        <authorList>
            <person name="Nelson K.E."/>
            <person name="Clayton R.A."/>
            <person name="Gill S.R."/>
            <person name="Gwinn M.L."/>
            <person name="Dodson R.J."/>
            <person name="Haft D.H."/>
            <person name="Hickey E.K."/>
            <person name="Peterson J.D."/>
            <person name="Nelson W.C."/>
            <person name="Ketchum K.A."/>
            <person name="McDonald L.A."/>
            <person name="Utterback T.R."/>
            <person name="Malek J.A."/>
            <person name="Linher K.D."/>
            <person name="Garrett M.M."/>
            <person name="Stewart A.M."/>
            <person name="Cotton M.D."/>
            <person name="Pratt M.S."/>
            <person name="Phillips C.A."/>
            <person name="Richardson D.L."/>
            <person name="Heidelberg J.F."/>
            <person name="Sutton G.G."/>
            <person name="Fleischmann R.D."/>
            <person name="Eisen J.A."/>
            <person name="White O."/>
            <person name="Salzberg S.L."/>
            <person name="Smith H.O."/>
            <person name="Venter J.C."/>
            <person name="Fraser C.M."/>
        </authorList>
    </citation>
    <scope>NUCLEOTIDE SEQUENCE [LARGE SCALE GENOMIC DNA]</scope>
    <source>
        <strain>ATCC 43589 / DSM 3109 / JCM 10099 / NBRC 100826 / MSB8</strain>
    </source>
</reference>
<feature type="chain" id="PRO_0000190642" description="4-hydroxy-3-methylbut-2-en-1-yl diphosphate synthase (flavodoxin)">
    <location>
        <begin position="1"/>
        <end position="344"/>
    </location>
</feature>
<feature type="binding site" evidence="1">
    <location>
        <position position="253"/>
    </location>
    <ligand>
        <name>[4Fe-4S] cluster</name>
        <dbReference type="ChEBI" id="CHEBI:49883"/>
    </ligand>
</feature>
<feature type="binding site" evidence="1">
    <location>
        <position position="256"/>
    </location>
    <ligand>
        <name>[4Fe-4S] cluster</name>
        <dbReference type="ChEBI" id="CHEBI:49883"/>
    </ligand>
</feature>
<feature type="binding site" evidence="1">
    <location>
        <position position="288"/>
    </location>
    <ligand>
        <name>[4Fe-4S] cluster</name>
        <dbReference type="ChEBI" id="CHEBI:49883"/>
    </ligand>
</feature>
<feature type="binding site" evidence="1">
    <location>
        <position position="295"/>
    </location>
    <ligand>
        <name>[4Fe-4S] cluster</name>
        <dbReference type="ChEBI" id="CHEBI:49883"/>
    </ligand>
</feature>
<accession>Q9WZZ3</accession>
<name>ISPG_THEMA</name>
<sequence length="344" mass="37760">MRKSVKVGKVVIGGEAPVSVQSMTTTKTADVEKTVSQIKSLERAGCEIVRVAVQDEEDAKAIRRIKEQIEIPLVADIQFDYRLAILSIENGADKIRINPGNMSRDRLKDVVAAAKGKGIPIRVGANVGSIKRRTSERWKDLAESALEEVRLLEKEGFYDIIVSVKSSDVLETIKANEYIAEKVEYPIHLGVTEAGVSETAIVKSSIAIGHLLLKNIGDTIRVSISGDPVREVIVGKKILIALGLREGVEVIACPTCGRAEIDVENMAKMIEENFFHVQKRLKIAVMGCVVNGIGEGKDADLGVAGLRDGAVIFVKGEIKERVSKEFVLERLKYYLNELLEEVER</sequence>